<protein>
    <recommendedName>
        <fullName evidence="1">GMP synthase [glutamine-hydrolyzing]</fullName>
        <ecNumber evidence="1">6.3.5.2</ecNumber>
    </recommendedName>
    <alternativeName>
        <fullName evidence="1">GMP synthetase</fullName>
    </alternativeName>
    <alternativeName>
        <fullName evidence="1">Glutamine amidotransferase</fullName>
    </alternativeName>
</protein>
<name>GUAA_SHEB2</name>
<dbReference type="EC" id="6.3.5.2" evidence="1"/>
<dbReference type="EMBL" id="CP001252">
    <property type="protein sequence ID" value="ACK45888.1"/>
    <property type="molecule type" value="Genomic_DNA"/>
</dbReference>
<dbReference type="RefSeq" id="WP_006085676.1">
    <property type="nucleotide sequence ID" value="NC_011663.1"/>
</dbReference>
<dbReference type="SMR" id="B8E9T4"/>
<dbReference type="MEROPS" id="C26.A07"/>
<dbReference type="KEGG" id="sbp:Sbal223_1380"/>
<dbReference type="HOGENOM" id="CLU_014340_0_5_6"/>
<dbReference type="UniPathway" id="UPA00189">
    <property type="reaction ID" value="UER00296"/>
</dbReference>
<dbReference type="Proteomes" id="UP000002507">
    <property type="component" value="Chromosome"/>
</dbReference>
<dbReference type="GO" id="GO:0005829">
    <property type="term" value="C:cytosol"/>
    <property type="evidence" value="ECO:0007669"/>
    <property type="project" value="TreeGrafter"/>
</dbReference>
<dbReference type="GO" id="GO:0005524">
    <property type="term" value="F:ATP binding"/>
    <property type="evidence" value="ECO:0007669"/>
    <property type="project" value="UniProtKB-UniRule"/>
</dbReference>
<dbReference type="GO" id="GO:0003921">
    <property type="term" value="F:GMP synthase activity"/>
    <property type="evidence" value="ECO:0007669"/>
    <property type="project" value="InterPro"/>
</dbReference>
<dbReference type="CDD" id="cd01742">
    <property type="entry name" value="GATase1_GMP_Synthase"/>
    <property type="match status" value="1"/>
</dbReference>
<dbReference type="CDD" id="cd01997">
    <property type="entry name" value="GMP_synthase_C"/>
    <property type="match status" value="1"/>
</dbReference>
<dbReference type="FunFam" id="3.30.300.10:FF:000002">
    <property type="entry name" value="GMP synthase [glutamine-hydrolyzing]"/>
    <property type="match status" value="1"/>
</dbReference>
<dbReference type="FunFam" id="3.40.50.620:FF:000001">
    <property type="entry name" value="GMP synthase [glutamine-hydrolyzing]"/>
    <property type="match status" value="1"/>
</dbReference>
<dbReference type="FunFam" id="3.40.50.880:FF:000001">
    <property type="entry name" value="GMP synthase [glutamine-hydrolyzing]"/>
    <property type="match status" value="1"/>
</dbReference>
<dbReference type="Gene3D" id="3.30.300.10">
    <property type="match status" value="1"/>
</dbReference>
<dbReference type="Gene3D" id="3.40.50.880">
    <property type="match status" value="1"/>
</dbReference>
<dbReference type="Gene3D" id="3.40.50.620">
    <property type="entry name" value="HUPs"/>
    <property type="match status" value="1"/>
</dbReference>
<dbReference type="HAMAP" id="MF_00344">
    <property type="entry name" value="GMP_synthase"/>
    <property type="match status" value="1"/>
</dbReference>
<dbReference type="InterPro" id="IPR029062">
    <property type="entry name" value="Class_I_gatase-like"/>
</dbReference>
<dbReference type="InterPro" id="IPR017926">
    <property type="entry name" value="GATASE"/>
</dbReference>
<dbReference type="InterPro" id="IPR001674">
    <property type="entry name" value="GMP_synth_C"/>
</dbReference>
<dbReference type="InterPro" id="IPR004739">
    <property type="entry name" value="GMP_synth_GATase"/>
</dbReference>
<dbReference type="InterPro" id="IPR022955">
    <property type="entry name" value="GMP_synthase"/>
</dbReference>
<dbReference type="InterPro" id="IPR025777">
    <property type="entry name" value="GMPS_ATP_PPase_dom"/>
</dbReference>
<dbReference type="InterPro" id="IPR022310">
    <property type="entry name" value="NAD/GMP_synthase"/>
</dbReference>
<dbReference type="InterPro" id="IPR014729">
    <property type="entry name" value="Rossmann-like_a/b/a_fold"/>
</dbReference>
<dbReference type="NCBIfam" id="TIGR00884">
    <property type="entry name" value="guaA_Cterm"/>
    <property type="match status" value="1"/>
</dbReference>
<dbReference type="NCBIfam" id="TIGR00888">
    <property type="entry name" value="guaA_Nterm"/>
    <property type="match status" value="1"/>
</dbReference>
<dbReference type="NCBIfam" id="NF000848">
    <property type="entry name" value="PRK00074.1"/>
    <property type="match status" value="1"/>
</dbReference>
<dbReference type="PANTHER" id="PTHR11922:SF2">
    <property type="entry name" value="GMP SYNTHASE [GLUTAMINE-HYDROLYZING]"/>
    <property type="match status" value="1"/>
</dbReference>
<dbReference type="PANTHER" id="PTHR11922">
    <property type="entry name" value="GMP SYNTHASE-RELATED"/>
    <property type="match status" value="1"/>
</dbReference>
<dbReference type="Pfam" id="PF00117">
    <property type="entry name" value="GATase"/>
    <property type="match status" value="1"/>
</dbReference>
<dbReference type="Pfam" id="PF00958">
    <property type="entry name" value="GMP_synt_C"/>
    <property type="match status" value="1"/>
</dbReference>
<dbReference type="Pfam" id="PF02540">
    <property type="entry name" value="NAD_synthase"/>
    <property type="match status" value="1"/>
</dbReference>
<dbReference type="PRINTS" id="PR00097">
    <property type="entry name" value="ANTSNTHASEII"/>
</dbReference>
<dbReference type="PRINTS" id="PR00099">
    <property type="entry name" value="CPSGATASE"/>
</dbReference>
<dbReference type="PRINTS" id="PR00096">
    <property type="entry name" value="GATASE"/>
</dbReference>
<dbReference type="SUPFAM" id="SSF52402">
    <property type="entry name" value="Adenine nucleotide alpha hydrolases-like"/>
    <property type="match status" value="1"/>
</dbReference>
<dbReference type="SUPFAM" id="SSF52317">
    <property type="entry name" value="Class I glutamine amidotransferase-like"/>
    <property type="match status" value="1"/>
</dbReference>
<dbReference type="SUPFAM" id="SSF54810">
    <property type="entry name" value="GMP synthetase C-terminal dimerisation domain"/>
    <property type="match status" value="1"/>
</dbReference>
<dbReference type="PROSITE" id="PS51273">
    <property type="entry name" value="GATASE_TYPE_1"/>
    <property type="match status" value="1"/>
</dbReference>
<dbReference type="PROSITE" id="PS51553">
    <property type="entry name" value="GMPS_ATP_PPASE"/>
    <property type="match status" value="1"/>
</dbReference>
<keyword id="KW-0067">ATP-binding</keyword>
<keyword id="KW-0315">Glutamine amidotransferase</keyword>
<keyword id="KW-0332">GMP biosynthesis</keyword>
<keyword id="KW-0436">Ligase</keyword>
<keyword id="KW-0547">Nucleotide-binding</keyword>
<keyword id="KW-0658">Purine biosynthesis</keyword>
<sequence length="525" mass="58246">MSDIHEHKILILDFGSQYTQLIARRIREIGVYCELWAWDVTEAQIREFAPNGIILAGGPESVTAENSPRAPEYVFTAGVPVLGICYGMQTMSEQLGGKVIQGVGEGEFGYAQIEMLTDSLLFKGIEDAVNSEGKPLLDVWMSHGDKVSAIPEGFVAVAKTDTCPFAAMANEEKQFFGVQFHPEVTHTRQGMRMLSHFALDICGCAANWKPSSIIEDAIERLKKQIGDDEVILGLSGGVDSSVVAMLLHRAIGKKLTCVFVDNGLLRLNEAEQVMEMFGDHFGLNIIHVDAENRFLDAMKGEADPEAKRKIIGRVFVEIFDEESKKCANAKWLAQGTIYPDVIESAGSATGKAHVIKSHHNVGGLPDHMELGLVEPLRELFKDEVRKIGLELGLPYNMLYRHPFPGPGLGVRVLGEVKKEYCDLLRRADAIFIEELHKADLYNKVSQAFTVFLPVRSVGVMGDGRKYDWVVSLRAVETVDFMTAHWAHLPYDFLGRVSNRIINEVDGISRVVYDISGKPPATIEWE</sequence>
<proteinExistence type="inferred from homology"/>
<accession>B8E9T4</accession>
<reference key="1">
    <citation type="submission" date="2008-12" db="EMBL/GenBank/DDBJ databases">
        <title>Complete sequence of chromosome of Shewanella baltica OS223.</title>
        <authorList>
            <consortium name="US DOE Joint Genome Institute"/>
            <person name="Lucas S."/>
            <person name="Copeland A."/>
            <person name="Lapidus A."/>
            <person name="Glavina del Rio T."/>
            <person name="Dalin E."/>
            <person name="Tice H."/>
            <person name="Bruce D."/>
            <person name="Goodwin L."/>
            <person name="Pitluck S."/>
            <person name="Chertkov O."/>
            <person name="Meincke L."/>
            <person name="Brettin T."/>
            <person name="Detter J.C."/>
            <person name="Han C."/>
            <person name="Kuske C.R."/>
            <person name="Larimer F."/>
            <person name="Land M."/>
            <person name="Hauser L."/>
            <person name="Kyrpides N."/>
            <person name="Ovchinnikova G."/>
            <person name="Brettar I."/>
            <person name="Rodrigues J."/>
            <person name="Konstantinidis K."/>
            <person name="Tiedje J."/>
        </authorList>
    </citation>
    <scope>NUCLEOTIDE SEQUENCE [LARGE SCALE GENOMIC DNA]</scope>
    <source>
        <strain>OS223</strain>
    </source>
</reference>
<organism>
    <name type="scientific">Shewanella baltica (strain OS223)</name>
    <dbReference type="NCBI Taxonomy" id="407976"/>
    <lineage>
        <taxon>Bacteria</taxon>
        <taxon>Pseudomonadati</taxon>
        <taxon>Pseudomonadota</taxon>
        <taxon>Gammaproteobacteria</taxon>
        <taxon>Alteromonadales</taxon>
        <taxon>Shewanellaceae</taxon>
        <taxon>Shewanella</taxon>
    </lineage>
</organism>
<comment type="function">
    <text evidence="1">Catalyzes the synthesis of GMP from XMP.</text>
</comment>
<comment type="catalytic activity">
    <reaction evidence="1">
        <text>XMP + L-glutamine + ATP + H2O = GMP + L-glutamate + AMP + diphosphate + 2 H(+)</text>
        <dbReference type="Rhea" id="RHEA:11680"/>
        <dbReference type="ChEBI" id="CHEBI:15377"/>
        <dbReference type="ChEBI" id="CHEBI:15378"/>
        <dbReference type="ChEBI" id="CHEBI:29985"/>
        <dbReference type="ChEBI" id="CHEBI:30616"/>
        <dbReference type="ChEBI" id="CHEBI:33019"/>
        <dbReference type="ChEBI" id="CHEBI:57464"/>
        <dbReference type="ChEBI" id="CHEBI:58115"/>
        <dbReference type="ChEBI" id="CHEBI:58359"/>
        <dbReference type="ChEBI" id="CHEBI:456215"/>
        <dbReference type="EC" id="6.3.5.2"/>
    </reaction>
</comment>
<comment type="pathway">
    <text evidence="1">Purine metabolism; GMP biosynthesis; GMP from XMP (L-Gln route): step 1/1.</text>
</comment>
<comment type="subunit">
    <text evidence="1">Homodimer.</text>
</comment>
<evidence type="ECO:0000255" key="1">
    <source>
        <dbReference type="HAMAP-Rule" id="MF_00344"/>
    </source>
</evidence>
<gene>
    <name evidence="1" type="primary">guaA</name>
    <name type="ordered locus">Sbal223_1380</name>
</gene>
<feature type="chain" id="PRO_1000133380" description="GMP synthase [glutamine-hydrolyzing]">
    <location>
        <begin position="1"/>
        <end position="525"/>
    </location>
</feature>
<feature type="domain" description="Glutamine amidotransferase type-1" evidence="1">
    <location>
        <begin position="8"/>
        <end position="207"/>
    </location>
</feature>
<feature type="domain" description="GMPS ATP-PPase" evidence="1">
    <location>
        <begin position="208"/>
        <end position="400"/>
    </location>
</feature>
<feature type="active site" description="Nucleophile" evidence="1">
    <location>
        <position position="85"/>
    </location>
</feature>
<feature type="active site" evidence="1">
    <location>
        <position position="181"/>
    </location>
</feature>
<feature type="active site" evidence="1">
    <location>
        <position position="183"/>
    </location>
</feature>
<feature type="binding site" evidence="1">
    <location>
        <begin position="235"/>
        <end position="241"/>
    </location>
    <ligand>
        <name>ATP</name>
        <dbReference type="ChEBI" id="CHEBI:30616"/>
    </ligand>
</feature>